<feature type="signal peptide" evidence="4">
    <location>
        <begin position="1"/>
        <end position="27"/>
    </location>
</feature>
<feature type="chain" id="PRO_0000030983" description="Ribonuclease S-7">
    <location>
        <begin position="28"/>
        <end position="226"/>
    </location>
</feature>
<feature type="active site" description="Proton donor" evidence="3 6">
    <location>
        <position position="60"/>
    </location>
</feature>
<feature type="active site" evidence="1">
    <location>
        <position position="112"/>
    </location>
</feature>
<feature type="active site" description="Proton acceptor" evidence="3 6">
    <location>
        <position position="116"/>
    </location>
</feature>
<feature type="binding site" evidence="2">
    <location>
        <position position="36"/>
    </location>
    <ligand>
        <name>RNA</name>
        <dbReference type="ChEBI" id="CHEBI:33697"/>
    </ligand>
    <ligandPart>
        <name>a 3'-terminal ribonucleotide 3'-phosphate residue</name>
        <dbReference type="ChEBI" id="CHEBI:83062"/>
    </ligandPart>
</feature>
<feature type="binding site" evidence="2">
    <location>
        <position position="60"/>
    </location>
    <ligand>
        <name>RNA</name>
        <dbReference type="ChEBI" id="CHEBI:33697"/>
    </ligand>
    <ligandPart>
        <name>a 3'-terminal ribonucleotide 3'-phosphate residue</name>
        <dbReference type="ChEBI" id="CHEBI:83062"/>
    </ligandPart>
</feature>
<feature type="binding site" evidence="2">
    <location>
        <begin position="98"/>
        <end position="99"/>
    </location>
    <ligand>
        <name>RNA</name>
        <dbReference type="ChEBI" id="CHEBI:33697"/>
    </ligand>
    <ligandPart>
        <name>a 3'-terminal ribonucleotide 3'-phosphate residue</name>
        <dbReference type="ChEBI" id="CHEBI:83062"/>
    </ligandPart>
</feature>
<feature type="binding site" evidence="2">
    <location>
        <position position="108"/>
    </location>
    <ligand>
        <name>RNA</name>
        <dbReference type="ChEBI" id="CHEBI:33697"/>
    </ligand>
    <ligandPart>
        <name>a 3'-terminal ribonucleotide 3'-phosphate residue</name>
        <dbReference type="ChEBI" id="CHEBI:83062"/>
    </ligandPart>
</feature>
<feature type="binding site" evidence="2">
    <location>
        <begin position="111"/>
        <end position="112"/>
    </location>
    <ligand>
        <name>RNA</name>
        <dbReference type="ChEBI" id="CHEBI:33697"/>
    </ligand>
    <ligandPart>
        <name>a 3'-terminal ribonucleotide 3'-phosphate residue</name>
        <dbReference type="ChEBI" id="CHEBI:83062"/>
    </ligandPart>
</feature>
<feature type="binding site" evidence="2">
    <location>
        <begin position="115"/>
        <end position="116"/>
    </location>
    <ligand>
        <name>RNA</name>
        <dbReference type="ChEBI" id="CHEBI:33697"/>
    </ligand>
    <ligandPart>
        <name>a 3'-terminal ribonucleotide 3'-phosphate residue</name>
        <dbReference type="ChEBI" id="CHEBI:83062"/>
    </ligandPart>
</feature>
<feature type="glycosylation site" description="N-linked (GlcNAc...) asparagine; alternate" evidence="5 8">
    <location>
        <position position="74"/>
    </location>
</feature>
<feature type="glycosylation site" description="N-linked (GlcNAc...) asparagine; alternate" evidence="5 8">
    <location>
        <position position="77"/>
    </location>
</feature>
<feature type="glycosylation site" description="N-linked (GlcNAc...) asparagine" evidence="5 8">
    <location>
        <position position="126"/>
    </location>
</feature>
<feature type="glycosylation site" description="N-linked (GlcNAc...) asparagine" evidence="5 8">
    <location>
        <position position="144"/>
    </location>
</feature>
<feature type="glycosylation site" description="N-linked (GlcNAc...) asparagine" evidence="5 8">
    <location>
        <position position="172"/>
    </location>
</feature>
<feature type="disulfide bond" evidence="3">
    <location>
        <begin position="42"/>
        <end position="49"/>
    </location>
</feature>
<feature type="disulfide bond" evidence="1">
    <location>
        <begin position="75"/>
        <end position="119"/>
    </location>
</feature>
<feature type="disulfide bond" evidence="1">
    <location>
        <begin position="183"/>
        <end position="220"/>
    </location>
</feature>
<feature type="disulfide bond" evidence="2">
    <location>
        <begin position="198"/>
        <end position="209"/>
    </location>
</feature>
<proteinExistence type="evidence at protein level"/>
<evidence type="ECO:0000250" key="1">
    <source>
        <dbReference type="UniProtKB" id="P08056"/>
    </source>
</evidence>
<evidence type="ECO:0000250" key="2">
    <source>
        <dbReference type="UniProtKB" id="P23540"/>
    </source>
</evidence>
<evidence type="ECO:0000250" key="3">
    <source>
        <dbReference type="UniProtKB" id="Q7SID5"/>
    </source>
</evidence>
<evidence type="ECO:0000255" key="4"/>
<evidence type="ECO:0000255" key="5">
    <source>
        <dbReference type="PROSITE-ProRule" id="PRU00498"/>
    </source>
</evidence>
<evidence type="ECO:0000255" key="6">
    <source>
        <dbReference type="PROSITE-ProRule" id="PRU10045"/>
    </source>
</evidence>
<evidence type="ECO:0000255" key="7">
    <source>
        <dbReference type="PROSITE-ProRule" id="PRU10046"/>
    </source>
</evidence>
<evidence type="ECO:0000269" key="8">
    <source>
    </source>
</evidence>
<evidence type="ECO:0000305" key="9"/>
<accession>O80325</accession>
<comment type="function">
    <text>Self-incompatibility (SI) is the inherited ability of a flowering plant to prevent self-fertilization by discriminating between self and non-self pollen during pollination. In many species, self-incompatibility is controlled by the single, multiallelic locus S.</text>
</comment>
<comment type="catalytic activity">
    <reaction evidence="6">
        <text>a ribonucleotidyl-ribonucleotide-RNA + H2O = a 3'-end 3'-phospho-ribonucleotide-RNA + a 5'-end dephospho-ribonucleoside-RNA + H(+)</text>
        <dbReference type="Rhea" id="RHEA:68052"/>
        <dbReference type="Rhea" id="RHEA-COMP:10463"/>
        <dbReference type="Rhea" id="RHEA-COMP:13936"/>
        <dbReference type="Rhea" id="RHEA-COMP:17355"/>
        <dbReference type="ChEBI" id="CHEBI:15377"/>
        <dbReference type="ChEBI" id="CHEBI:15378"/>
        <dbReference type="ChEBI" id="CHEBI:83062"/>
        <dbReference type="ChEBI" id="CHEBI:138284"/>
        <dbReference type="ChEBI" id="CHEBI:173118"/>
        <dbReference type="EC" id="4.6.1.19"/>
    </reaction>
</comment>
<comment type="PTM">
    <text>The N-glycans attached at Asn-74 and Asn-77 consist of either monosaccharide (GlcNAc) or disaccharide (GlcNAc-GlcNAc) that could not be distinguished. The N-glycan at Asn-144 contains mannose and xylose, and at Asn-126 contains mannose, xylose and fucose. The N-glycan at Asn-172 consists of disaccharide (GlcNAc-GlcNAc).</text>
</comment>
<comment type="similarity">
    <text evidence="9">Belongs to the RNase T2 family.</text>
</comment>
<comment type="caution">
    <text evidence="9">Gln-112 is present instead of the conserved Glu which is expected to act as an active site proton donor.</text>
</comment>
<organism>
    <name type="scientific">Pyrus pyrifolia</name>
    <name type="common">Chinese pear</name>
    <name type="synonym">Pyrus serotina</name>
    <dbReference type="NCBI Taxonomy" id="3767"/>
    <lineage>
        <taxon>Eukaryota</taxon>
        <taxon>Viridiplantae</taxon>
        <taxon>Streptophyta</taxon>
        <taxon>Embryophyta</taxon>
        <taxon>Tracheophyta</taxon>
        <taxon>Spermatophyta</taxon>
        <taxon>Magnoliopsida</taxon>
        <taxon>eudicotyledons</taxon>
        <taxon>Gunneridae</taxon>
        <taxon>Pentapetalae</taxon>
        <taxon>rosids</taxon>
        <taxon>fabids</taxon>
        <taxon>Rosales</taxon>
        <taxon>Rosaceae</taxon>
        <taxon>Amygdaloideae</taxon>
        <taxon>Maleae</taxon>
        <taxon>Pyrus</taxon>
    </lineage>
</organism>
<protein>
    <recommendedName>
        <fullName>Ribonuclease S-7</fullName>
        <ecNumber evidence="7">4.6.1.19</ecNumber>
    </recommendedName>
    <alternativeName>
        <fullName>S7-RNase</fullName>
    </alternativeName>
</protein>
<name>RNS7_PYRPY</name>
<keyword id="KW-1015">Disulfide bond</keyword>
<keyword id="KW-0255">Endonuclease</keyword>
<keyword id="KW-0325">Glycoprotein</keyword>
<keyword id="KW-0378">Hydrolase</keyword>
<keyword id="KW-0456">Lyase</keyword>
<keyword id="KW-0540">Nuclease</keyword>
<keyword id="KW-0732">Signal</keyword>
<reference key="1">
    <citation type="journal article" date="1998" name="Plant Mol. Biol.">
        <title>Primary structural features of rosaceous S-RNases associated with gametophytic self-incompatibility.</title>
        <authorList>
            <person name="Ishimizu T."/>
            <person name="Shinkawa T."/>
            <person name="Sakiyama F."/>
            <person name="Norioka S."/>
        </authorList>
    </citation>
    <scope>NUCLEOTIDE SEQUENCE [MRNA]</scope>
    <source>
        <strain>cv. Okusankichi</strain>
        <tissue>Style</tissue>
    </source>
</reference>
<reference key="2">
    <citation type="journal article" date="1999" name="Eur. J. Biochem.">
        <title>Presence of asparagine-linked N-acetylglucosamine and chitobiose in Pyrus pyrifolia S-RNases associated with gametophytic self-incompatibility.</title>
        <authorList>
            <person name="Ishimizu T."/>
            <person name="Mitsukami Y."/>
            <person name="Shinkawa T."/>
            <person name="Natsuka S."/>
            <person name="Hase S."/>
            <person name="Miyagi M."/>
            <person name="Sakiyama F."/>
            <person name="Norioka S."/>
        </authorList>
    </citation>
    <scope>GLYCOSYLATION AT ASN-74; ASN-77; ASN-126; ASN-144 AND ASN-172</scope>
    <scope>STRUCTURE OF CARBOHYDRATES</scope>
    <source>
        <strain>cv. Hosui</strain>
        <tissue>Style</tissue>
    </source>
</reference>
<sequence length="226" mass="25470">MGITGMIYIVTMVFSLIVLILSSSTVGYDYFQFTQQYQPAVCNSKPTPCKDPPDKLFTVHGLWPSNLNGPHPENCTNATVNPHRIKNIQAQLKIIWPNVLDRTNHVGFWNKQWIKHGSCGYPAIMNDTHYFQTVINMYITQKQNVSEILSKAKIEPLGIQRPLVHIENAIRNSTNNKKPKFKCQKNSGVTELVEVGLCSDGSLTQFRNCPHPPPGSPYLCPADVKY</sequence>
<dbReference type="EC" id="4.6.1.19" evidence="7"/>
<dbReference type="EMBL" id="AB002143">
    <property type="protein sequence ID" value="BAA32416.1"/>
    <property type="molecule type" value="mRNA"/>
</dbReference>
<dbReference type="SMR" id="O80325"/>
<dbReference type="iPTMnet" id="O80325"/>
<dbReference type="GO" id="GO:0005576">
    <property type="term" value="C:extracellular region"/>
    <property type="evidence" value="ECO:0007669"/>
    <property type="project" value="TreeGrafter"/>
</dbReference>
<dbReference type="GO" id="GO:0033897">
    <property type="term" value="F:ribonuclease T2 activity"/>
    <property type="evidence" value="ECO:0007669"/>
    <property type="project" value="UniProtKB-EC"/>
</dbReference>
<dbReference type="GO" id="GO:0003723">
    <property type="term" value="F:RNA binding"/>
    <property type="evidence" value="ECO:0007669"/>
    <property type="project" value="InterPro"/>
</dbReference>
<dbReference type="GO" id="GO:0006401">
    <property type="term" value="P:RNA catabolic process"/>
    <property type="evidence" value="ECO:0007669"/>
    <property type="project" value="TreeGrafter"/>
</dbReference>
<dbReference type="CDD" id="cd01061">
    <property type="entry name" value="RNase_T2_euk"/>
    <property type="match status" value="1"/>
</dbReference>
<dbReference type="Gene3D" id="3.90.730.10">
    <property type="entry name" value="Ribonuclease T2-like"/>
    <property type="match status" value="1"/>
</dbReference>
<dbReference type="InterPro" id="IPR033697">
    <property type="entry name" value="Ribonuclease_T2_eukaryotic"/>
</dbReference>
<dbReference type="InterPro" id="IPR001568">
    <property type="entry name" value="RNase_T2-like"/>
</dbReference>
<dbReference type="InterPro" id="IPR036430">
    <property type="entry name" value="RNase_T2-like_sf"/>
</dbReference>
<dbReference type="InterPro" id="IPR018188">
    <property type="entry name" value="RNase_T2_His_AS_1"/>
</dbReference>
<dbReference type="PANTHER" id="PTHR11240:SF18">
    <property type="entry name" value="OS07G0630400 PROTEIN"/>
    <property type="match status" value="1"/>
</dbReference>
<dbReference type="PANTHER" id="PTHR11240">
    <property type="entry name" value="RIBONUCLEASE T2"/>
    <property type="match status" value="1"/>
</dbReference>
<dbReference type="Pfam" id="PF00445">
    <property type="entry name" value="Ribonuclease_T2"/>
    <property type="match status" value="1"/>
</dbReference>
<dbReference type="SUPFAM" id="SSF55895">
    <property type="entry name" value="Ribonuclease Rh-like"/>
    <property type="match status" value="1"/>
</dbReference>
<dbReference type="PROSITE" id="PS00530">
    <property type="entry name" value="RNASE_T2_1"/>
    <property type="match status" value="1"/>
</dbReference>